<name>SPDE2_HUMAN</name>
<gene>
    <name type="primary">SPDYE2</name>
</gene>
<feature type="chain" id="PRO_0000332292" description="Speedy protein E2">
    <location>
        <begin position="1"/>
        <end position="402"/>
    </location>
</feature>
<feature type="region of interest" description="Disordered" evidence="1">
    <location>
        <begin position="1"/>
        <end position="89"/>
    </location>
</feature>
<feature type="compositionally biased region" description="Polar residues" evidence="1">
    <location>
        <begin position="16"/>
        <end position="39"/>
    </location>
</feature>
<feature type="compositionally biased region" description="Acidic residues" evidence="1">
    <location>
        <begin position="76"/>
        <end position="89"/>
    </location>
</feature>
<feature type="splice variant" id="VSP_039851" description="In isoform 2." evidence="2">
    <location>
        <begin position="1"/>
        <end position="144"/>
    </location>
</feature>
<feature type="sequence conflict" description="In Ref. 1; BAG63573." evidence="3" ref="1">
    <original>V</original>
    <variation>L</variation>
    <location>
        <position position="130"/>
    </location>
</feature>
<feature type="sequence conflict" description="In Ref. 1; BAG63573 and 3; AAI00974." evidence="3" ref="1 3">
    <original>P</original>
    <variation>R</variation>
    <location>
        <position position="287"/>
    </location>
</feature>
<accession>Q495Y8</accession>
<accession>B4DY11</accession>
<comment type="interaction">
    <interactant intactId="EBI-10241662">
        <id>Q495Y8</id>
    </interactant>
    <interactant intactId="EBI-1004115">
        <id>Q15691</id>
        <label>MAPRE1</label>
    </interactant>
    <organismsDiffer>false</organismsDiffer>
    <experiments>3</experiments>
</comment>
<comment type="alternative products">
    <event type="alternative splicing"/>
    <isoform>
        <id>Q495Y8-1</id>
        <name>1</name>
        <sequence type="displayed"/>
    </isoform>
    <isoform>
        <id>Q495Y8-2</id>
        <name>2</name>
        <sequence type="described" ref="VSP_039851"/>
    </isoform>
</comment>
<comment type="similarity">
    <text evidence="3">Belongs to the Speedy/Ringo family.</text>
</comment>
<keyword id="KW-0025">Alternative splicing</keyword>
<keyword id="KW-1185">Reference proteome</keyword>
<reference key="1">
    <citation type="journal article" date="2004" name="Nat. Genet.">
        <title>Complete sequencing and characterization of 21,243 full-length human cDNAs.</title>
        <authorList>
            <person name="Ota T."/>
            <person name="Suzuki Y."/>
            <person name="Nishikawa T."/>
            <person name="Otsuki T."/>
            <person name="Sugiyama T."/>
            <person name="Irie R."/>
            <person name="Wakamatsu A."/>
            <person name="Hayashi K."/>
            <person name="Sato H."/>
            <person name="Nagai K."/>
            <person name="Kimura K."/>
            <person name="Makita H."/>
            <person name="Sekine M."/>
            <person name="Obayashi M."/>
            <person name="Nishi T."/>
            <person name="Shibahara T."/>
            <person name="Tanaka T."/>
            <person name="Ishii S."/>
            <person name="Yamamoto J."/>
            <person name="Saito K."/>
            <person name="Kawai Y."/>
            <person name="Isono Y."/>
            <person name="Nakamura Y."/>
            <person name="Nagahari K."/>
            <person name="Murakami K."/>
            <person name="Yasuda T."/>
            <person name="Iwayanagi T."/>
            <person name="Wagatsuma M."/>
            <person name="Shiratori A."/>
            <person name="Sudo H."/>
            <person name="Hosoiri T."/>
            <person name="Kaku Y."/>
            <person name="Kodaira H."/>
            <person name="Kondo H."/>
            <person name="Sugawara M."/>
            <person name="Takahashi M."/>
            <person name="Kanda K."/>
            <person name="Yokoi T."/>
            <person name="Furuya T."/>
            <person name="Kikkawa E."/>
            <person name="Omura Y."/>
            <person name="Abe K."/>
            <person name="Kamihara K."/>
            <person name="Katsuta N."/>
            <person name="Sato K."/>
            <person name="Tanikawa M."/>
            <person name="Yamazaki M."/>
            <person name="Ninomiya K."/>
            <person name="Ishibashi T."/>
            <person name="Yamashita H."/>
            <person name="Murakawa K."/>
            <person name="Fujimori K."/>
            <person name="Tanai H."/>
            <person name="Kimata M."/>
            <person name="Watanabe M."/>
            <person name="Hiraoka S."/>
            <person name="Chiba Y."/>
            <person name="Ishida S."/>
            <person name="Ono Y."/>
            <person name="Takiguchi S."/>
            <person name="Watanabe S."/>
            <person name="Yosida M."/>
            <person name="Hotuta T."/>
            <person name="Kusano J."/>
            <person name="Kanehori K."/>
            <person name="Takahashi-Fujii A."/>
            <person name="Hara H."/>
            <person name="Tanase T.-O."/>
            <person name="Nomura Y."/>
            <person name="Togiya S."/>
            <person name="Komai F."/>
            <person name="Hara R."/>
            <person name="Takeuchi K."/>
            <person name="Arita M."/>
            <person name="Imose N."/>
            <person name="Musashino K."/>
            <person name="Yuuki H."/>
            <person name="Oshima A."/>
            <person name="Sasaki N."/>
            <person name="Aotsuka S."/>
            <person name="Yoshikawa Y."/>
            <person name="Matsunawa H."/>
            <person name="Ichihara T."/>
            <person name="Shiohata N."/>
            <person name="Sano S."/>
            <person name="Moriya S."/>
            <person name="Momiyama H."/>
            <person name="Satoh N."/>
            <person name="Takami S."/>
            <person name="Terashima Y."/>
            <person name="Suzuki O."/>
            <person name="Nakagawa S."/>
            <person name="Senoh A."/>
            <person name="Mizoguchi H."/>
            <person name="Goto Y."/>
            <person name="Shimizu F."/>
            <person name="Wakebe H."/>
            <person name="Hishigaki H."/>
            <person name="Watanabe T."/>
            <person name="Sugiyama A."/>
            <person name="Takemoto M."/>
            <person name="Kawakami B."/>
            <person name="Yamazaki M."/>
            <person name="Watanabe K."/>
            <person name="Kumagai A."/>
            <person name="Itakura S."/>
            <person name="Fukuzumi Y."/>
            <person name="Fujimori Y."/>
            <person name="Komiyama M."/>
            <person name="Tashiro H."/>
            <person name="Tanigami A."/>
            <person name="Fujiwara T."/>
            <person name="Ono T."/>
            <person name="Yamada K."/>
            <person name="Fujii Y."/>
            <person name="Ozaki K."/>
            <person name="Hirao M."/>
            <person name="Ohmori Y."/>
            <person name="Kawabata A."/>
            <person name="Hikiji T."/>
            <person name="Kobatake N."/>
            <person name="Inagaki H."/>
            <person name="Ikema Y."/>
            <person name="Okamoto S."/>
            <person name="Okitani R."/>
            <person name="Kawakami T."/>
            <person name="Noguchi S."/>
            <person name="Itoh T."/>
            <person name="Shigeta K."/>
            <person name="Senba T."/>
            <person name="Matsumura K."/>
            <person name="Nakajima Y."/>
            <person name="Mizuno T."/>
            <person name="Morinaga M."/>
            <person name="Sasaki M."/>
            <person name="Togashi T."/>
            <person name="Oyama M."/>
            <person name="Hata H."/>
            <person name="Watanabe M."/>
            <person name="Komatsu T."/>
            <person name="Mizushima-Sugano J."/>
            <person name="Satoh T."/>
            <person name="Shirai Y."/>
            <person name="Takahashi Y."/>
            <person name="Nakagawa K."/>
            <person name="Okumura K."/>
            <person name="Nagase T."/>
            <person name="Nomura N."/>
            <person name="Kikuchi H."/>
            <person name="Masuho Y."/>
            <person name="Yamashita R."/>
            <person name="Nakai K."/>
            <person name="Yada T."/>
            <person name="Nakamura Y."/>
            <person name="Ohara O."/>
            <person name="Isogai T."/>
            <person name="Sugano S."/>
        </authorList>
    </citation>
    <scope>NUCLEOTIDE SEQUENCE [LARGE SCALE MRNA] (ISOFORM 1)</scope>
    <source>
        <tissue>Testis</tissue>
    </source>
</reference>
<reference key="2">
    <citation type="journal article" date="2003" name="Nature">
        <title>The DNA sequence of human chromosome 7.</title>
        <authorList>
            <person name="Hillier L.W."/>
            <person name="Fulton R.S."/>
            <person name="Fulton L.A."/>
            <person name="Graves T.A."/>
            <person name="Pepin K.H."/>
            <person name="Wagner-McPherson C."/>
            <person name="Layman D."/>
            <person name="Maas J."/>
            <person name="Jaeger S."/>
            <person name="Walker R."/>
            <person name="Wylie K."/>
            <person name="Sekhon M."/>
            <person name="Becker M.C."/>
            <person name="O'Laughlin M.D."/>
            <person name="Schaller M.E."/>
            <person name="Fewell G.A."/>
            <person name="Delehaunty K.D."/>
            <person name="Miner T.L."/>
            <person name="Nash W.E."/>
            <person name="Cordes M."/>
            <person name="Du H."/>
            <person name="Sun H."/>
            <person name="Edwards J."/>
            <person name="Bradshaw-Cordum H."/>
            <person name="Ali J."/>
            <person name="Andrews S."/>
            <person name="Isak A."/>
            <person name="Vanbrunt A."/>
            <person name="Nguyen C."/>
            <person name="Du F."/>
            <person name="Lamar B."/>
            <person name="Courtney L."/>
            <person name="Kalicki J."/>
            <person name="Ozersky P."/>
            <person name="Bielicki L."/>
            <person name="Scott K."/>
            <person name="Holmes A."/>
            <person name="Harkins R."/>
            <person name="Harris A."/>
            <person name="Strong C.M."/>
            <person name="Hou S."/>
            <person name="Tomlinson C."/>
            <person name="Dauphin-Kohlberg S."/>
            <person name="Kozlowicz-Reilly A."/>
            <person name="Leonard S."/>
            <person name="Rohlfing T."/>
            <person name="Rock S.M."/>
            <person name="Tin-Wollam A.-M."/>
            <person name="Abbott A."/>
            <person name="Minx P."/>
            <person name="Maupin R."/>
            <person name="Strowmatt C."/>
            <person name="Latreille P."/>
            <person name="Miller N."/>
            <person name="Johnson D."/>
            <person name="Murray J."/>
            <person name="Woessner J.P."/>
            <person name="Wendl M.C."/>
            <person name="Yang S.-P."/>
            <person name="Schultz B.R."/>
            <person name="Wallis J.W."/>
            <person name="Spieth J."/>
            <person name="Bieri T.A."/>
            <person name="Nelson J.O."/>
            <person name="Berkowicz N."/>
            <person name="Wohldmann P.E."/>
            <person name="Cook L.L."/>
            <person name="Hickenbotham M.T."/>
            <person name="Eldred J."/>
            <person name="Williams D."/>
            <person name="Bedell J.A."/>
            <person name="Mardis E.R."/>
            <person name="Clifton S.W."/>
            <person name="Chissoe S.L."/>
            <person name="Marra M.A."/>
            <person name="Raymond C."/>
            <person name="Haugen E."/>
            <person name="Gillett W."/>
            <person name="Zhou Y."/>
            <person name="James R."/>
            <person name="Phelps K."/>
            <person name="Iadanoto S."/>
            <person name="Bubb K."/>
            <person name="Simms E."/>
            <person name="Levy R."/>
            <person name="Clendenning J."/>
            <person name="Kaul R."/>
            <person name="Kent W.J."/>
            <person name="Furey T.S."/>
            <person name="Baertsch R.A."/>
            <person name="Brent M.R."/>
            <person name="Keibler E."/>
            <person name="Flicek P."/>
            <person name="Bork P."/>
            <person name="Suyama M."/>
            <person name="Bailey J.A."/>
            <person name="Portnoy M.E."/>
            <person name="Torrents D."/>
            <person name="Chinwalla A.T."/>
            <person name="Gish W.R."/>
            <person name="Eddy S.R."/>
            <person name="McPherson J.D."/>
            <person name="Olson M.V."/>
            <person name="Eichler E.E."/>
            <person name="Green E.D."/>
            <person name="Waterston R.H."/>
            <person name="Wilson R.K."/>
        </authorList>
    </citation>
    <scope>NUCLEOTIDE SEQUENCE [LARGE SCALE GENOMIC DNA]</scope>
</reference>
<reference key="3">
    <citation type="journal article" date="2004" name="Genome Res.">
        <title>The status, quality, and expansion of the NIH full-length cDNA project: the Mammalian Gene Collection (MGC).</title>
        <authorList>
            <consortium name="The MGC Project Team"/>
        </authorList>
    </citation>
    <scope>NUCLEOTIDE SEQUENCE [LARGE SCALE MRNA] (ISOFORM 2)</scope>
</reference>
<dbReference type="EMBL" id="AK302217">
    <property type="protein sequence ID" value="BAG63573.1"/>
    <property type="molecule type" value="mRNA"/>
</dbReference>
<dbReference type="EMBL" id="AC093668">
    <property type="status" value="NOT_ANNOTATED_CDS"/>
    <property type="molecule type" value="Genomic_DNA"/>
</dbReference>
<dbReference type="EMBL" id="BC100973">
    <property type="protein sequence ID" value="AAI00974.1"/>
    <property type="molecule type" value="mRNA"/>
</dbReference>
<dbReference type="CCDS" id="CCDS34716.2">
    <molecule id="Q495Y8-1"/>
</dbReference>
<dbReference type="RefSeq" id="NP_001026789.2">
    <molecule id="Q495Y8-1"/>
    <property type="nucleotide sequence ID" value="NM_001031618.3"/>
</dbReference>
<dbReference type="RefSeq" id="NP_001383171.1">
    <molecule id="Q495Y8-1"/>
    <property type="nucleotide sequence ID" value="NM_001396242.1"/>
</dbReference>
<dbReference type="RefSeq" id="XP_016867712.1">
    <property type="nucleotide sequence ID" value="XM_017012223.1"/>
</dbReference>
<dbReference type="SMR" id="Q495Y8"/>
<dbReference type="BioGRID" id="137321">
    <property type="interactions" value="7"/>
</dbReference>
<dbReference type="FunCoup" id="Q495Y8">
    <property type="interactions" value="158"/>
</dbReference>
<dbReference type="IntAct" id="Q495Y8">
    <property type="interactions" value="1"/>
</dbReference>
<dbReference type="STRING" id="9606.ENSP00000421686"/>
<dbReference type="iPTMnet" id="Q495Y8"/>
<dbReference type="PhosphoSitePlus" id="Q495Y8"/>
<dbReference type="BioMuta" id="SPDYE2"/>
<dbReference type="DMDM" id="308153503"/>
<dbReference type="MassIVE" id="Q495Y8"/>
<dbReference type="PaxDb" id="9606-ENSP00000421686"/>
<dbReference type="PeptideAtlas" id="Q495Y8"/>
<dbReference type="Antibodypedia" id="76761">
    <property type="antibodies" value="6 antibodies from 6 providers"/>
</dbReference>
<dbReference type="DNASU" id="441273"/>
<dbReference type="Ensembl" id="ENST00000341656.5">
    <molecule id="Q495Y8-2"/>
    <property type="protein sequence ID" value="ENSP00000342628.4"/>
    <property type="gene ID" value="ENSG00000205238.12"/>
</dbReference>
<dbReference type="Ensembl" id="ENST00000507918.6">
    <molecule id="Q495Y8-1"/>
    <property type="protein sequence ID" value="ENSP00000421686.1"/>
    <property type="gene ID" value="ENSG00000205238.12"/>
</dbReference>
<dbReference type="Ensembl" id="ENST00000691607.2">
    <molecule id="Q495Y8-1"/>
    <property type="protein sequence ID" value="ENSP00000509749.1"/>
    <property type="gene ID" value="ENSG00000205238.12"/>
</dbReference>
<dbReference type="GeneID" id="441273"/>
<dbReference type="KEGG" id="hsa:441273"/>
<dbReference type="MANE-Select" id="ENST00000691607.2">
    <property type="protein sequence ID" value="ENSP00000509749.1"/>
    <property type="RefSeq nucleotide sequence ID" value="NM_001396242.1"/>
    <property type="RefSeq protein sequence ID" value="NP_001383171.1"/>
</dbReference>
<dbReference type="UCSC" id="uc011kkx.3">
    <molecule id="Q495Y8-1"/>
    <property type="organism name" value="human"/>
</dbReference>
<dbReference type="AGR" id="HGNC:33841"/>
<dbReference type="CTD" id="441273"/>
<dbReference type="GeneCards" id="SPDYE2"/>
<dbReference type="HGNC" id="HGNC:33841">
    <property type="gene designation" value="SPDYE2"/>
</dbReference>
<dbReference type="HPA" id="ENSG00000205238">
    <property type="expression patterns" value="Tissue enhanced (testis)"/>
</dbReference>
<dbReference type="MIM" id="617624">
    <property type="type" value="gene"/>
</dbReference>
<dbReference type="neXtProt" id="NX_Q495Y8"/>
<dbReference type="OpenTargets" id="ENSG00000205238"/>
<dbReference type="PharmGKB" id="PA164726233"/>
<dbReference type="VEuPathDB" id="HostDB:ENSG00000205238"/>
<dbReference type="eggNOG" id="ENOG502SSQN">
    <property type="taxonomic scope" value="Eukaryota"/>
</dbReference>
<dbReference type="GeneTree" id="ENSGT00940000154173"/>
<dbReference type="HOGENOM" id="CLU_070353_0_0_1"/>
<dbReference type="InParanoid" id="Q495Y8"/>
<dbReference type="OMA" id="TMNPRAR"/>
<dbReference type="PAN-GO" id="Q495Y8">
    <property type="GO annotations" value="1 GO annotation based on evolutionary models"/>
</dbReference>
<dbReference type="PhylomeDB" id="Q495Y8"/>
<dbReference type="TreeFam" id="TF329827"/>
<dbReference type="PathwayCommons" id="Q495Y8"/>
<dbReference type="SignaLink" id="Q495Y8"/>
<dbReference type="BioGRID-ORCS" id="441273">
    <property type="hits" value="247 hits in 586 CRISPR screens"/>
</dbReference>
<dbReference type="ChiTaRS" id="SPDYE2">
    <property type="organism name" value="human"/>
</dbReference>
<dbReference type="GenomeRNAi" id="441273"/>
<dbReference type="Pharos" id="Q495Y8">
    <property type="development level" value="Tdark"/>
</dbReference>
<dbReference type="PRO" id="PR:Q495Y8"/>
<dbReference type="Proteomes" id="UP000005640">
    <property type="component" value="Chromosome 7"/>
</dbReference>
<dbReference type="RNAct" id="Q495Y8">
    <property type="molecule type" value="protein"/>
</dbReference>
<dbReference type="Bgee" id="ENSG00000205238">
    <property type="expression patterns" value="Expressed in male germ line stem cell (sensu Vertebrata) in testis and 101 other cell types or tissues"/>
</dbReference>
<dbReference type="ExpressionAtlas" id="Q495Y8">
    <property type="expression patterns" value="baseline and differential"/>
</dbReference>
<dbReference type="GO" id="GO:0019901">
    <property type="term" value="F:protein kinase binding"/>
    <property type="evidence" value="ECO:0000318"/>
    <property type="project" value="GO_Central"/>
</dbReference>
<dbReference type="InterPro" id="IPR020984">
    <property type="entry name" value="Speedy"/>
</dbReference>
<dbReference type="PANTHER" id="PTHR31156">
    <property type="entry name" value="WBSCR19-LIKE PROTEIN"/>
    <property type="match status" value="1"/>
</dbReference>
<dbReference type="Pfam" id="PF11357">
    <property type="entry name" value="Spy1"/>
    <property type="match status" value="2"/>
</dbReference>
<evidence type="ECO:0000256" key="1">
    <source>
        <dbReference type="SAM" id="MobiDB-lite"/>
    </source>
</evidence>
<evidence type="ECO:0000303" key="2">
    <source>
    </source>
</evidence>
<evidence type="ECO:0000305" key="3"/>
<proteinExistence type="evidence at protein level"/>
<organism>
    <name type="scientific">Homo sapiens</name>
    <name type="common">Human</name>
    <dbReference type="NCBI Taxonomy" id="9606"/>
    <lineage>
        <taxon>Eukaryota</taxon>
        <taxon>Metazoa</taxon>
        <taxon>Chordata</taxon>
        <taxon>Craniata</taxon>
        <taxon>Vertebrata</taxon>
        <taxon>Euteleostomi</taxon>
        <taxon>Mammalia</taxon>
        <taxon>Eutheria</taxon>
        <taxon>Euarchontoglires</taxon>
        <taxon>Primates</taxon>
        <taxon>Haplorrhini</taxon>
        <taxon>Catarrhini</taxon>
        <taxon>Hominidae</taxon>
        <taxon>Homo</taxon>
    </lineage>
</organism>
<protein>
    <recommendedName>
        <fullName>Speedy protein E2</fullName>
    </recommendedName>
</protein>
<sequence length="402" mass="48300">MDRTETRFRKRGQITGKITTSRQPHPQNEQSPQRSTSGYPLQEVVDDEMLGPSAPGVDPSPPCRSLGWKRKREWSDESEEEPEKELAPEPEETWVVEMLCGLKMKLKQQRVSPILPEHHKDFNSQLAPGVDPSPPHRSFCWKRKMEWWDESEESLEEEPRKVLAPEPEEIWVAEMLCGLKMKLKRRRVSLVLPEHHEAFNRLLEDPVIKRFLAWDKDLRVSDKYLLAMVIAYFSRAGFPSWQYQRIHFFLALYLANDMEEDDEDSKQNIFHFLYRKNRSRIPLLRKPWFQLGHSMNPRARKNRSRIPLLRKRRFQLYRSTNPRARKNRSRIPLLRKRRFQLYRSMNSRARKNRSQIVLFQKRRFHFFCSMSCRAWVSPEELEEIQAYDPEHWVWARDRAHLS</sequence>